<reference key="1">
    <citation type="submission" date="2004-11" db="EMBL/GenBank/DDBJ databases">
        <title>Complete genome sequence of Thermus thermophilus HB8.</title>
        <authorList>
            <person name="Masui R."/>
            <person name="Kurokawa K."/>
            <person name="Nakagawa N."/>
            <person name="Tokunaga F."/>
            <person name="Koyama Y."/>
            <person name="Shibata T."/>
            <person name="Oshima T."/>
            <person name="Yokoyama S."/>
            <person name="Yasunaga T."/>
            <person name="Kuramitsu S."/>
        </authorList>
    </citation>
    <scope>NUCLEOTIDE SEQUENCE [LARGE SCALE GENOMIC DNA]</scope>
    <source>
        <strain>ATCC 27634 / DSM 579 / HB8</strain>
    </source>
</reference>
<organism>
    <name type="scientific">Thermus thermophilus (strain ATCC 27634 / DSM 579 / HB8)</name>
    <dbReference type="NCBI Taxonomy" id="300852"/>
    <lineage>
        <taxon>Bacteria</taxon>
        <taxon>Thermotogati</taxon>
        <taxon>Deinococcota</taxon>
        <taxon>Deinococci</taxon>
        <taxon>Thermales</taxon>
        <taxon>Thermaceae</taxon>
        <taxon>Thermus</taxon>
    </lineage>
</organism>
<accession>Q5SI38</accession>
<gene>
    <name type="primary">tilS</name>
    <name type="ordered locus">TTHA1542</name>
</gene>
<comment type="function">
    <text evidence="1">Ligates lysine onto the cytidine present at position 34 of the AUA codon-specific tRNA(Ile) that contains the anticodon CAU, in an ATP-dependent manner. Cytidine is converted to lysidine, thus changing the amino acid specificity of the tRNA from methionine to isoleucine (By similarity).</text>
</comment>
<comment type="catalytic activity">
    <reaction>
        <text>cytidine(34) in tRNA(Ile2) + L-lysine + ATP = lysidine(34) in tRNA(Ile2) + AMP + diphosphate + H(+)</text>
        <dbReference type="Rhea" id="RHEA:43744"/>
        <dbReference type="Rhea" id="RHEA-COMP:10625"/>
        <dbReference type="Rhea" id="RHEA-COMP:10670"/>
        <dbReference type="ChEBI" id="CHEBI:15378"/>
        <dbReference type="ChEBI" id="CHEBI:30616"/>
        <dbReference type="ChEBI" id="CHEBI:32551"/>
        <dbReference type="ChEBI" id="CHEBI:33019"/>
        <dbReference type="ChEBI" id="CHEBI:82748"/>
        <dbReference type="ChEBI" id="CHEBI:83665"/>
        <dbReference type="ChEBI" id="CHEBI:456215"/>
        <dbReference type="EC" id="6.3.4.19"/>
    </reaction>
</comment>
<comment type="subcellular location">
    <subcellularLocation>
        <location evidence="1">Cytoplasm</location>
    </subcellularLocation>
</comment>
<comment type="domain">
    <text>The N-terminal region contains the highly conserved SGGXDS motif, predicted to be a P-loop motif involved in ATP binding.</text>
</comment>
<comment type="similarity">
    <text evidence="4">Belongs to the tRNA(Ile)-lysidine synthase family.</text>
</comment>
<dbReference type="EC" id="6.3.4.19"/>
<dbReference type="EMBL" id="AP008226">
    <property type="protein sequence ID" value="BAD71365.1"/>
    <property type="molecule type" value="Genomic_DNA"/>
</dbReference>
<dbReference type="RefSeq" id="WP_011228750.1">
    <property type="nucleotide sequence ID" value="NC_006461.1"/>
</dbReference>
<dbReference type="RefSeq" id="YP_144808.1">
    <property type="nucleotide sequence ID" value="NC_006461.1"/>
</dbReference>
<dbReference type="SMR" id="Q5SI38"/>
<dbReference type="EnsemblBacteria" id="BAD71365">
    <property type="protein sequence ID" value="BAD71365"/>
    <property type="gene ID" value="BAD71365"/>
</dbReference>
<dbReference type="GeneID" id="3169806"/>
<dbReference type="KEGG" id="ttj:TTHA1542"/>
<dbReference type="eggNOG" id="COG0037">
    <property type="taxonomic scope" value="Bacteria"/>
</dbReference>
<dbReference type="eggNOG" id="COG0590">
    <property type="taxonomic scope" value="Bacteria"/>
</dbReference>
<dbReference type="HOGENOM" id="CLU_018869_0_1_0"/>
<dbReference type="Proteomes" id="UP000000532">
    <property type="component" value="Chromosome"/>
</dbReference>
<dbReference type="GO" id="GO:0005737">
    <property type="term" value="C:cytoplasm"/>
    <property type="evidence" value="ECO:0007669"/>
    <property type="project" value="UniProtKB-SubCell"/>
</dbReference>
<dbReference type="GO" id="GO:0005524">
    <property type="term" value="F:ATP binding"/>
    <property type="evidence" value="ECO:0007669"/>
    <property type="project" value="UniProtKB-UniRule"/>
</dbReference>
<dbReference type="GO" id="GO:0016787">
    <property type="term" value="F:hydrolase activity"/>
    <property type="evidence" value="ECO:0007669"/>
    <property type="project" value="InterPro"/>
</dbReference>
<dbReference type="GO" id="GO:0032267">
    <property type="term" value="F:tRNA(Ile)-lysidine synthase activity"/>
    <property type="evidence" value="ECO:0007669"/>
    <property type="project" value="UniProtKB-EC"/>
</dbReference>
<dbReference type="GO" id="GO:0008270">
    <property type="term" value="F:zinc ion binding"/>
    <property type="evidence" value="ECO:0007669"/>
    <property type="project" value="InterPro"/>
</dbReference>
<dbReference type="GO" id="GO:0006400">
    <property type="term" value="P:tRNA modification"/>
    <property type="evidence" value="ECO:0007669"/>
    <property type="project" value="UniProtKB-UniRule"/>
</dbReference>
<dbReference type="CDD" id="cd01285">
    <property type="entry name" value="nucleoside_deaminase"/>
    <property type="match status" value="1"/>
</dbReference>
<dbReference type="CDD" id="cd01992">
    <property type="entry name" value="TilS_N"/>
    <property type="match status" value="1"/>
</dbReference>
<dbReference type="Gene3D" id="3.40.140.10">
    <property type="entry name" value="Cytidine Deaminase, domain 2"/>
    <property type="match status" value="1"/>
</dbReference>
<dbReference type="Gene3D" id="3.40.50.620">
    <property type="entry name" value="HUPs"/>
    <property type="match status" value="1"/>
</dbReference>
<dbReference type="HAMAP" id="MF_01161">
    <property type="entry name" value="tRNA_Ile_lys_synt"/>
    <property type="match status" value="1"/>
</dbReference>
<dbReference type="InterPro" id="IPR016192">
    <property type="entry name" value="APOBEC/CMP_deaminase_Zn-bd"/>
</dbReference>
<dbReference type="InterPro" id="IPR002125">
    <property type="entry name" value="CMP_dCMP_dom"/>
</dbReference>
<dbReference type="InterPro" id="IPR016193">
    <property type="entry name" value="Cytidine_deaminase-like"/>
</dbReference>
<dbReference type="InterPro" id="IPR014729">
    <property type="entry name" value="Rossmann-like_a/b/a_fold"/>
</dbReference>
<dbReference type="InterPro" id="IPR011063">
    <property type="entry name" value="TilS/TtcA_N"/>
</dbReference>
<dbReference type="InterPro" id="IPR012094">
    <property type="entry name" value="tRNA_Ile_lys_synt"/>
</dbReference>
<dbReference type="InterPro" id="IPR012795">
    <property type="entry name" value="tRNA_Ile_lys_synt_N"/>
</dbReference>
<dbReference type="NCBIfam" id="TIGR02432">
    <property type="entry name" value="lysidine_TilS_N"/>
    <property type="match status" value="1"/>
</dbReference>
<dbReference type="PANTHER" id="PTHR43033">
    <property type="entry name" value="TRNA(ILE)-LYSIDINE SYNTHASE-RELATED"/>
    <property type="match status" value="1"/>
</dbReference>
<dbReference type="PANTHER" id="PTHR43033:SF1">
    <property type="entry name" value="TRNA(ILE)-LYSIDINE SYNTHASE-RELATED"/>
    <property type="match status" value="1"/>
</dbReference>
<dbReference type="Pfam" id="PF01171">
    <property type="entry name" value="ATP_bind_3"/>
    <property type="match status" value="1"/>
</dbReference>
<dbReference type="Pfam" id="PF00383">
    <property type="entry name" value="dCMP_cyt_deam_1"/>
    <property type="match status" value="1"/>
</dbReference>
<dbReference type="SUPFAM" id="SSF52402">
    <property type="entry name" value="Adenine nucleotide alpha hydrolases-like"/>
    <property type="match status" value="1"/>
</dbReference>
<dbReference type="SUPFAM" id="SSF53927">
    <property type="entry name" value="Cytidine deaminase-like"/>
    <property type="match status" value="1"/>
</dbReference>
<dbReference type="SUPFAM" id="SSF82829">
    <property type="entry name" value="MesJ substrate recognition domain-like"/>
    <property type="match status" value="1"/>
</dbReference>
<dbReference type="PROSITE" id="PS00903">
    <property type="entry name" value="CYT_DCMP_DEAMINASES_1"/>
    <property type="match status" value="1"/>
</dbReference>
<dbReference type="PROSITE" id="PS51747">
    <property type="entry name" value="CYT_DCMP_DEAMINASES_2"/>
    <property type="match status" value="1"/>
</dbReference>
<evidence type="ECO:0000250" key="1"/>
<evidence type="ECO:0000255" key="2"/>
<evidence type="ECO:0000255" key="3">
    <source>
        <dbReference type="PROSITE-ProRule" id="PRU01083"/>
    </source>
</evidence>
<evidence type="ECO:0000305" key="4"/>
<feature type="chain" id="PRO_0000181793" description="tRNA(Ile)-lysidine synthase">
    <location>
        <begin position="1"/>
        <end position="507"/>
    </location>
</feature>
<feature type="domain" description="CMP/dCMP-type deaminase" evidence="3">
    <location>
        <begin position="370"/>
        <end position="500"/>
    </location>
</feature>
<feature type="binding site" evidence="2">
    <location>
        <begin position="24"/>
        <end position="29"/>
    </location>
    <ligand>
        <name>ATP</name>
        <dbReference type="ChEBI" id="CHEBI:30616"/>
    </ligand>
</feature>
<feature type="binding site" evidence="1">
    <location>
        <position position="420"/>
    </location>
    <ligand>
        <name>Zn(2+)</name>
        <dbReference type="ChEBI" id="CHEBI:29105"/>
        <note>catalytic</note>
    </ligand>
</feature>
<feature type="binding site" evidence="1">
    <location>
        <position position="445"/>
    </location>
    <ligand>
        <name>Zn(2+)</name>
        <dbReference type="ChEBI" id="CHEBI:29105"/>
        <note>catalytic</note>
    </ligand>
</feature>
<feature type="binding site" evidence="1">
    <location>
        <position position="448"/>
    </location>
    <ligand>
        <name>Zn(2+)</name>
        <dbReference type="ChEBI" id="CHEBI:29105"/>
        <note>catalytic</note>
    </ligand>
</feature>
<protein>
    <recommendedName>
        <fullName>tRNA(Ile)-lysidine synthase</fullName>
        <ecNumber>6.3.4.19</ecNumber>
    </recommendedName>
    <alternativeName>
        <fullName>tRNA(Ile)-2-lysyl-cytidine synthase</fullName>
    </alternativeName>
    <alternativeName>
        <fullName>tRNA(Ile)-lysidine synthetase</fullName>
    </alternativeName>
</protein>
<proteinExistence type="inferred from homology"/>
<name>TILS_THET8</name>
<keyword id="KW-0067">ATP-binding</keyword>
<keyword id="KW-0963">Cytoplasm</keyword>
<keyword id="KW-0436">Ligase</keyword>
<keyword id="KW-0479">Metal-binding</keyword>
<keyword id="KW-0547">Nucleotide-binding</keyword>
<keyword id="KW-1185">Reference proteome</keyword>
<keyword id="KW-0819">tRNA processing</keyword>
<keyword id="KW-0862">Zinc</keyword>
<sequence length="507" mass="56308">MDVPAFRERLLRLAPKDPLVLAVSGGGDSVALALLVKEAGRQAVVAHLDHGLRPESPLDQAFVRALAERLGFPFFTERVEVARIAQARGENLEAVAREVRYAFLHRVAREVGARAILTAHTLDDQAETVLLQLLQGTARATGIREREGIVVRPLLAHTREELRAYLRARGEAWREDPTNQDPALDRNFLRLFVFPLLEERFPAAKRALARFAEARAEEEGVLERQAEARLLPDPRFFVPAFRAAPLLEAPLAVRRRALRRLLEKLGLRPEARLVLLLEEALRGRPQTLPGGVLARRKGGTLFLLPPRPRLPLPPGFRRPAPGDYLERPSGRKRLVDFLAEKGVPRELKPLWPVRAEGNRVVEVLGLYPPPPEEAHMAEALAEAASAFREGEVPVGAVLVLPGRVLRAHNRVEGLRDPTAHAEMLLLREAGPEARGGRLYVTLEPCLMCHHALAQAGVEVVYGAENLKEGALTRFGLPTRARGGVRERECAKLLRDFFARLREGCRSG</sequence>